<keyword id="KW-0030">Aminoacyl-tRNA synthetase</keyword>
<keyword id="KW-0067">ATP-binding</keyword>
<keyword id="KW-0963">Cytoplasm</keyword>
<keyword id="KW-0436">Ligase</keyword>
<keyword id="KW-0547">Nucleotide-binding</keyword>
<keyword id="KW-0648">Protein biosynthesis</keyword>
<keyword id="KW-1185">Reference proteome</keyword>
<evidence type="ECO:0000255" key="1">
    <source>
        <dbReference type="HAMAP-Rule" id="MF_00022"/>
    </source>
</evidence>
<gene>
    <name evidence="1" type="primary">gltX</name>
    <name type="ordered locus">SynRCC307_1666</name>
</gene>
<comment type="function">
    <text evidence="1">Catalyzes the attachment of glutamate to tRNA(Glu) in a two-step reaction: glutamate is first activated by ATP to form Glu-AMP and then transferred to the acceptor end of tRNA(Glu).</text>
</comment>
<comment type="catalytic activity">
    <reaction evidence="1">
        <text>tRNA(Glu) + L-glutamate + ATP = L-glutamyl-tRNA(Glu) + AMP + diphosphate</text>
        <dbReference type="Rhea" id="RHEA:23540"/>
        <dbReference type="Rhea" id="RHEA-COMP:9663"/>
        <dbReference type="Rhea" id="RHEA-COMP:9680"/>
        <dbReference type="ChEBI" id="CHEBI:29985"/>
        <dbReference type="ChEBI" id="CHEBI:30616"/>
        <dbReference type="ChEBI" id="CHEBI:33019"/>
        <dbReference type="ChEBI" id="CHEBI:78442"/>
        <dbReference type="ChEBI" id="CHEBI:78520"/>
        <dbReference type="ChEBI" id="CHEBI:456215"/>
        <dbReference type="EC" id="6.1.1.17"/>
    </reaction>
</comment>
<comment type="subunit">
    <text evidence="1">Monomer.</text>
</comment>
<comment type="subcellular location">
    <subcellularLocation>
        <location evidence="1">Cytoplasm</location>
    </subcellularLocation>
</comment>
<comment type="similarity">
    <text evidence="1">Belongs to the class-I aminoacyl-tRNA synthetase family. Glutamate--tRNA ligase type 1 subfamily.</text>
</comment>
<protein>
    <recommendedName>
        <fullName evidence="1">Glutamate--tRNA ligase</fullName>
        <ecNumber evidence="1">6.1.1.17</ecNumber>
    </recommendedName>
    <alternativeName>
        <fullName evidence="1">Glutamyl-tRNA synthetase</fullName>
        <shortName evidence="1">GluRS</shortName>
    </alternativeName>
</protein>
<reference key="1">
    <citation type="submission" date="2006-05" db="EMBL/GenBank/DDBJ databases">
        <authorList>
            <consortium name="Genoscope"/>
        </authorList>
    </citation>
    <scope>NUCLEOTIDE SEQUENCE [LARGE SCALE GENOMIC DNA]</scope>
    <source>
        <strain>RCC307</strain>
    </source>
</reference>
<organism>
    <name type="scientific">Synechococcus sp. (strain RCC307)</name>
    <dbReference type="NCBI Taxonomy" id="316278"/>
    <lineage>
        <taxon>Bacteria</taxon>
        <taxon>Bacillati</taxon>
        <taxon>Cyanobacteriota</taxon>
        <taxon>Cyanophyceae</taxon>
        <taxon>Synechococcales</taxon>
        <taxon>Synechococcaceae</taxon>
        <taxon>Synechococcus</taxon>
    </lineage>
</organism>
<accession>A5GUL0</accession>
<feature type="chain" id="PRO_1000001980" description="Glutamate--tRNA ligase">
    <location>
        <begin position="1"/>
        <end position="475"/>
    </location>
</feature>
<feature type="short sequence motif" description="'HIGH' region" evidence="1">
    <location>
        <begin position="8"/>
        <end position="18"/>
    </location>
</feature>
<feature type="short sequence motif" description="'KMSKS' region" evidence="1">
    <location>
        <begin position="247"/>
        <end position="251"/>
    </location>
</feature>
<feature type="binding site" evidence="1">
    <location>
        <position position="250"/>
    </location>
    <ligand>
        <name>ATP</name>
        <dbReference type="ChEBI" id="CHEBI:30616"/>
    </ligand>
</feature>
<proteinExistence type="inferred from homology"/>
<name>SYE_SYNR3</name>
<sequence length="475" mass="52732">MVRVRLAPSPTGTLHIGTARTAVFNWLYARRHGGEFVLRIEDTDKERSKSEYTSNILDGLKWLGIDWDAEPVIQSERVEQHRQAIQQLLDAGLAYRCYASEEELNAMREAQMANKKAPRYDNRHRNLSHEQEADYQAEGRQATVRFRIDDSRNIQWNDLVRGAMSWSGADLGGDMVIARRAPADQIGDPLYNLVVVVDDAAMAITHVIRGEDHIANTAKQLLLYEALGLPLPEFAHTPLILNQEGRKLSKRDGVTSVSDFRGMGYTASALANYMTLLGWSPPEGMGERFSLAEAAKVFDFQRVNKAGARFDWDKLNWLNGQVLHELGAAELNRKLTPLWQEAGFETSGRSQAWLEQLCELLGPSLTLLADGVEQARPFFETPSLKEDAQQQLQQPGAKEALKALLSSLSDEPLQAEQAKALISDACKAADVKKGVLMKSLRGALMGQLQGPDLMESWLLLNAAGQDRGRISSALG</sequence>
<dbReference type="EC" id="6.1.1.17" evidence="1"/>
<dbReference type="EMBL" id="CT978603">
    <property type="protein sequence ID" value="CAK28569.1"/>
    <property type="molecule type" value="Genomic_DNA"/>
</dbReference>
<dbReference type="SMR" id="A5GUL0"/>
<dbReference type="STRING" id="316278.SynRCC307_1666"/>
<dbReference type="KEGG" id="syr:SynRCC307_1666"/>
<dbReference type="eggNOG" id="COG0008">
    <property type="taxonomic scope" value="Bacteria"/>
</dbReference>
<dbReference type="HOGENOM" id="CLU_015768_6_0_3"/>
<dbReference type="OrthoDB" id="9807503at2"/>
<dbReference type="Proteomes" id="UP000001115">
    <property type="component" value="Chromosome"/>
</dbReference>
<dbReference type="GO" id="GO:0005829">
    <property type="term" value="C:cytosol"/>
    <property type="evidence" value="ECO:0007669"/>
    <property type="project" value="TreeGrafter"/>
</dbReference>
<dbReference type="GO" id="GO:0005524">
    <property type="term" value="F:ATP binding"/>
    <property type="evidence" value="ECO:0007669"/>
    <property type="project" value="UniProtKB-UniRule"/>
</dbReference>
<dbReference type="GO" id="GO:0004818">
    <property type="term" value="F:glutamate-tRNA ligase activity"/>
    <property type="evidence" value="ECO:0007669"/>
    <property type="project" value="UniProtKB-UniRule"/>
</dbReference>
<dbReference type="GO" id="GO:0000049">
    <property type="term" value="F:tRNA binding"/>
    <property type="evidence" value="ECO:0007669"/>
    <property type="project" value="InterPro"/>
</dbReference>
<dbReference type="GO" id="GO:0008270">
    <property type="term" value="F:zinc ion binding"/>
    <property type="evidence" value="ECO:0007669"/>
    <property type="project" value="InterPro"/>
</dbReference>
<dbReference type="GO" id="GO:0006424">
    <property type="term" value="P:glutamyl-tRNA aminoacylation"/>
    <property type="evidence" value="ECO:0007669"/>
    <property type="project" value="UniProtKB-UniRule"/>
</dbReference>
<dbReference type="CDD" id="cd00808">
    <property type="entry name" value="GluRS_core"/>
    <property type="match status" value="1"/>
</dbReference>
<dbReference type="FunFam" id="3.40.50.620:FF:000007">
    <property type="entry name" value="Glutamate--tRNA ligase"/>
    <property type="match status" value="1"/>
</dbReference>
<dbReference type="Gene3D" id="1.10.10.350">
    <property type="match status" value="1"/>
</dbReference>
<dbReference type="Gene3D" id="1.10.8.70">
    <property type="entry name" value="Glutamate-tRNA synthetase, class I, anticodon-binding domain 1"/>
    <property type="match status" value="1"/>
</dbReference>
<dbReference type="Gene3D" id="1.10.1160.10">
    <property type="entry name" value="Glutamyl-trna Synthetase, Domain 2"/>
    <property type="match status" value="1"/>
</dbReference>
<dbReference type="Gene3D" id="3.90.800.10">
    <property type="entry name" value="Glutamyl-tRNA Synthetase, Domain 3"/>
    <property type="match status" value="1"/>
</dbReference>
<dbReference type="Gene3D" id="3.40.50.620">
    <property type="entry name" value="HUPs"/>
    <property type="match status" value="1"/>
</dbReference>
<dbReference type="HAMAP" id="MF_00022">
    <property type="entry name" value="Glu_tRNA_synth_type1"/>
    <property type="match status" value="1"/>
</dbReference>
<dbReference type="InterPro" id="IPR045462">
    <property type="entry name" value="aa-tRNA-synth_I_cd-bd"/>
</dbReference>
<dbReference type="InterPro" id="IPR020751">
    <property type="entry name" value="aa-tRNA-synth_I_codon-bd_sub2"/>
</dbReference>
<dbReference type="InterPro" id="IPR001412">
    <property type="entry name" value="aa-tRNA-synth_I_CS"/>
</dbReference>
<dbReference type="InterPro" id="IPR008925">
    <property type="entry name" value="aa_tRNA-synth_I_cd-bd_sf"/>
</dbReference>
<dbReference type="InterPro" id="IPR004527">
    <property type="entry name" value="Glu-tRNA-ligase_bac/mito"/>
</dbReference>
<dbReference type="InterPro" id="IPR020752">
    <property type="entry name" value="Glu-tRNA-synth_I_codon-bd_sub1"/>
</dbReference>
<dbReference type="InterPro" id="IPR000924">
    <property type="entry name" value="Glu/Gln-tRNA-synth"/>
</dbReference>
<dbReference type="InterPro" id="IPR020058">
    <property type="entry name" value="Glu/Gln-tRNA-synth_Ib_cat-dom"/>
</dbReference>
<dbReference type="InterPro" id="IPR020061">
    <property type="entry name" value="Glu_tRNA_lig_a-bdl"/>
</dbReference>
<dbReference type="InterPro" id="IPR049940">
    <property type="entry name" value="GluQ/Sye"/>
</dbReference>
<dbReference type="InterPro" id="IPR033910">
    <property type="entry name" value="GluRS_core"/>
</dbReference>
<dbReference type="InterPro" id="IPR014729">
    <property type="entry name" value="Rossmann-like_a/b/a_fold"/>
</dbReference>
<dbReference type="NCBIfam" id="TIGR00464">
    <property type="entry name" value="gltX_bact"/>
    <property type="match status" value="1"/>
</dbReference>
<dbReference type="NCBIfam" id="NF004315">
    <property type="entry name" value="PRK05710.1-4"/>
    <property type="match status" value="1"/>
</dbReference>
<dbReference type="PANTHER" id="PTHR43311">
    <property type="entry name" value="GLUTAMATE--TRNA LIGASE"/>
    <property type="match status" value="1"/>
</dbReference>
<dbReference type="PANTHER" id="PTHR43311:SF2">
    <property type="entry name" value="GLUTAMATE--TRNA LIGASE, MITOCHONDRIAL-RELATED"/>
    <property type="match status" value="1"/>
</dbReference>
<dbReference type="Pfam" id="PF19269">
    <property type="entry name" value="Anticodon_2"/>
    <property type="match status" value="1"/>
</dbReference>
<dbReference type="Pfam" id="PF00749">
    <property type="entry name" value="tRNA-synt_1c"/>
    <property type="match status" value="1"/>
</dbReference>
<dbReference type="PRINTS" id="PR00987">
    <property type="entry name" value="TRNASYNTHGLU"/>
</dbReference>
<dbReference type="SUPFAM" id="SSF48163">
    <property type="entry name" value="An anticodon-binding domain of class I aminoacyl-tRNA synthetases"/>
    <property type="match status" value="1"/>
</dbReference>
<dbReference type="SUPFAM" id="SSF52374">
    <property type="entry name" value="Nucleotidylyl transferase"/>
    <property type="match status" value="1"/>
</dbReference>
<dbReference type="PROSITE" id="PS00178">
    <property type="entry name" value="AA_TRNA_LIGASE_I"/>
    <property type="match status" value="1"/>
</dbReference>